<accession>A4VHM2</accession>
<gene>
    <name evidence="1" type="primary">rplL</name>
    <name type="ordered locus">PST_0776</name>
</gene>
<evidence type="ECO:0000255" key="1">
    <source>
        <dbReference type="HAMAP-Rule" id="MF_00368"/>
    </source>
</evidence>
<evidence type="ECO:0000305" key="2"/>
<keyword id="KW-1185">Reference proteome</keyword>
<keyword id="KW-0687">Ribonucleoprotein</keyword>
<keyword id="KW-0689">Ribosomal protein</keyword>
<sequence length="122" mass="12487">MSLTNEQIIEAIGQKSVMEIVELIKAMEETFGVTAAAAVAAGPAAAAPAAEEQTEFTIVLAEAGDKKVNVIKAVRELTGLGLKEAKAVVDGAPGVVKEGVSKEEAEAAKKALEEAGAKVELK</sequence>
<feature type="chain" id="PRO_1000007066" description="Large ribosomal subunit protein bL12">
    <location>
        <begin position="1"/>
        <end position="122"/>
    </location>
</feature>
<comment type="function">
    <text evidence="1">Forms part of the ribosomal stalk which helps the ribosome interact with GTP-bound translation factors. Is thus essential for accurate translation.</text>
</comment>
<comment type="subunit">
    <text evidence="1">Homodimer. Part of the ribosomal stalk of the 50S ribosomal subunit. Forms a multimeric L10(L12)X complex, where L10 forms an elongated spine to which 2 to 4 L12 dimers bind in a sequential fashion. Binds GTP-bound translation factors.</text>
</comment>
<comment type="similarity">
    <text evidence="1">Belongs to the bacterial ribosomal protein bL12 family.</text>
</comment>
<name>RL7_STUS1</name>
<organism>
    <name type="scientific">Stutzerimonas stutzeri (strain A1501)</name>
    <name type="common">Pseudomonas stutzeri</name>
    <dbReference type="NCBI Taxonomy" id="379731"/>
    <lineage>
        <taxon>Bacteria</taxon>
        <taxon>Pseudomonadati</taxon>
        <taxon>Pseudomonadota</taxon>
        <taxon>Gammaproteobacteria</taxon>
        <taxon>Pseudomonadales</taxon>
        <taxon>Pseudomonadaceae</taxon>
        <taxon>Stutzerimonas</taxon>
    </lineage>
</organism>
<proteinExistence type="inferred from homology"/>
<dbReference type="EMBL" id="CP000304">
    <property type="protein sequence ID" value="ABP78473.1"/>
    <property type="molecule type" value="Genomic_DNA"/>
</dbReference>
<dbReference type="RefSeq" id="WP_011911980.1">
    <property type="nucleotide sequence ID" value="NC_009434.1"/>
</dbReference>
<dbReference type="SMR" id="A4VHM2"/>
<dbReference type="GeneID" id="66819918"/>
<dbReference type="KEGG" id="psa:PST_0776"/>
<dbReference type="eggNOG" id="COG0222">
    <property type="taxonomic scope" value="Bacteria"/>
</dbReference>
<dbReference type="HOGENOM" id="CLU_086499_3_2_6"/>
<dbReference type="Proteomes" id="UP000000233">
    <property type="component" value="Chromosome"/>
</dbReference>
<dbReference type="GO" id="GO:0022625">
    <property type="term" value="C:cytosolic large ribosomal subunit"/>
    <property type="evidence" value="ECO:0007669"/>
    <property type="project" value="TreeGrafter"/>
</dbReference>
<dbReference type="GO" id="GO:0003729">
    <property type="term" value="F:mRNA binding"/>
    <property type="evidence" value="ECO:0007669"/>
    <property type="project" value="TreeGrafter"/>
</dbReference>
<dbReference type="GO" id="GO:0003735">
    <property type="term" value="F:structural constituent of ribosome"/>
    <property type="evidence" value="ECO:0007669"/>
    <property type="project" value="InterPro"/>
</dbReference>
<dbReference type="GO" id="GO:0006412">
    <property type="term" value="P:translation"/>
    <property type="evidence" value="ECO:0007669"/>
    <property type="project" value="UniProtKB-UniRule"/>
</dbReference>
<dbReference type="CDD" id="cd00387">
    <property type="entry name" value="Ribosomal_L7_L12"/>
    <property type="match status" value="1"/>
</dbReference>
<dbReference type="FunFam" id="3.30.1390.10:FF:000001">
    <property type="entry name" value="50S ribosomal protein L7/L12"/>
    <property type="match status" value="1"/>
</dbReference>
<dbReference type="Gene3D" id="3.30.1390.10">
    <property type="match status" value="1"/>
</dbReference>
<dbReference type="Gene3D" id="1.20.5.710">
    <property type="entry name" value="Single helix bin"/>
    <property type="match status" value="1"/>
</dbReference>
<dbReference type="HAMAP" id="MF_00368">
    <property type="entry name" value="Ribosomal_bL12"/>
    <property type="match status" value="1"/>
</dbReference>
<dbReference type="InterPro" id="IPR000206">
    <property type="entry name" value="Ribosomal_bL12"/>
</dbReference>
<dbReference type="InterPro" id="IPR013823">
    <property type="entry name" value="Ribosomal_bL12_C"/>
</dbReference>
<dbReference type="InterPro" id="IPR014719">
    <property type="entry name" value="Ribosomal_bL12_C/ClpS-like"/>
</dbReference>
<dbReference type="InterPro" id="IPR008932">
    <property type="entry name" value="Ribosomal_bL12_oligo"/>
</dbReference>
<dbReference type="InterPro" id="IPR036235">
    <property type="entry name" value="Ribosomal_bL12_oligo_N_sf"/>
</dbReference>
<dbReference type="NCBIfam" id="TIGR00855">
    <property type="entry name" value="L12"/>
    <property type="match status" value="1"/>
</dbReference>
<dbReference type="PANTHER" id="PTHR45987">
    <property type="entry name" value="39S RIBOSOMAL PROTEIN L12"/>
    <property type="match status" value="1"/>
</dbReference>
<dbReference type="PANTHER" id="PTHR45987:SF4">
    <property type="entry name" value="LARGE RIBOSOMAL SUBUNIT PROTEIN BL12M"/>
    <property type="match status" value="1"/>
</dbReference>
<dbReference type="Pfam" id="PF00542">
    <property type="entry name" value="Ribosomal_L12"/>
    <property type="match status" value="1"/>
</dbReference>
<dbReference type="Pfam" id="PF16320">
    <property type="entry name" value="Ribosomal_L12_N"/>
    <property type="match status" value="1"/>
</dbReference>
<dbReference type="SUPFAM" id="SSF54736">
    <property type="entry name" value="ClpS-like"/>
    <property type="match status" value="1"/>
</dbReference>
<dbReference type="SUPFAM" id="SSF48300">
    <property type="entry name" value="Ribosomal protein L7/12, oligomerisation (N-terminal) domain"/>
    <property type="match status" value="1"/>
</dbReference>
<protein>
    <recommendedName>
        <fullName evidence="1">Large ribosomal subunit protein bL12</fullName>
    </recommendedName>
    <alternativeName>
        <fullName evidence="2">50S ribosomal protein L7/L12</fullName>
    </alternativeName>
</protein>
<reference key="1">
    <citation type="journal article" date="2008" name="Proc. Natl. Acad. Sci. U.S.A.">
        <title>Nitrogen fixation island and rhizosphere competence traits in the genome of root-associated Pseudomonas stutzeri A1501.</title>
        <authorList>
            <person name="Yan Y."/>
            <person name="Yang J."/>
            <person name="Dou Y."/>
            <person name="Chen M."/>
            <person name="Ping S."/>
            <person name="Peng J."/>
            <person name="Lu W."/>
            <person name="Zhang W."/>
            <person name="Yao Z."/>
            <person name="Li H."/>
            <person name="Liu W."/>
            <person name="He S."/>
            <person name="Geng L."/>
            <person name="Zhang X."/>
            <person name="Yang F."/>
            <person name="Yu H."/>
            <person name="Zhan Y."/>
            <person name="Li D."/>
            <person name="Lin Z."/>
            <person name="Wang Y."/>
            <person name="Elmerich C."/>
            <person name="Lin M."/>
            <person name="Jin Q."/>
        </authorList>
    </citation>
    <scope>NUCLEOTIDE SEQUENCE [LARGE SCALE GENOMIC DNA]</scope>
    <source>
        <strain>A1501</strain>
    </source>
</reference>